<comment type="function">
    <text evidence="1 2">Short and branched chain specific acyl-CoA dehydrogenase that catalyzes the removal of one hydrogen from C-2 and C-3 of the fatty acyl-CoA thioester, resulting in the formation of trans-2-enoyl-CoA. Among the different mitochondrial acyl-CoA dehydrogenases, acts specifically on short and branched chain acyl-CoA derivatives such as (S)-2-methylbutyryl-CoA as well as short straight chain acyl-CoAs such as butyryl-CoA (By similarity). Plays an important role in the metabolism of L-isoleucine by catalyzing the dehydrogenation of 2-methylbutyryl-CoA, one of the steps of the L-isoleucine catabolic pathway (By similarity). Can also act on valproyl-CoA, a metabolite of the valproic acid drug (By similarity).</text>
</comment>
<comment type="catalytic activity">
    <reaction evidence="2">
        <text>2-methylbutanoyl-CoA + oxidized [electron-transfer flavoprotein] + H(+) = (2E)-2-methylbut-2-enoyl-CoA + reduced [electron-transfer flavoprotein]</text>
        <dbReference type="Rhea" id="RHEA:43780"/>
        <dbReference type="Rhea" id="RHEA-COMP:10685"/>
        <dbReference type="Rhea" id="RHEA-COMP:10686"/>
        <dbReference type="ChEBI" id="CHEBI:15378"/>
        <dbReference type="ChEBI" id="CHEBI:57336"/>
        <dbReference type="ChEBI" id="CHEBI:57337"/>
        <dbReference type="ChEBI" id="CHEBI:57692"/>
        <dbReference type="ChEBI" id="CHEBI:58307"/>
        <dbReference type="EC" id="1.3.8.5"/>
    </reaction>
    <physiologicalReaction direction="left-to-right" evidence="2">
        <dbReference type="Rhea" id="RHEA:43781"/>
    </physiologicalReaction>
</comment>
<comment type="catalytic activity">
    <reaction evidence="2">
        <text>(2S)-2-methylbutanoyl-CoA + oxidized [electron-transfer flavoprotein] + H(+) = (2E)-2-methylbut-2-enoyl-CoA + reduced [electron-transfer flavoprotein]</text>
        <dbReference type="Rhea" id="RHEA:48256"/>
        <dbReference type="Rhea" id="RHEA-COMP:10685"/>
        <dbReference type="Rhea" id="RHEA-COMP:10686"/>
        <dbReference type="ChEBI" id="CHEBI:15378"/>
        <dbReference type="ChEBI" id="CHEBI:57337"/>
        <dbReference type="ChEBI" id="CHEBI:57692"/>
        <dbReference type="ChEBI" id="CHEBI:58307"/>
        <dbReference type="ChEBI" id="CHEBI:88166"/>
    </reaction>
    <physiologicalReaction direction="left-to-right" evidence="2">
        <dbReference type="Rhea" id="RHEA:48257"/>
    </physiologicalReaction>
</comment>
<comment type="catalytic activity">
    <reaction evidence="2">
        <text>(2R)-2-methylbutanoyl-CoA + oxidized [electron-transfer flavoprotein] + H(+) = ethylacryloyl-CoA + reduced [electron-transfer flavoprotein]</text>
        <dbReference type="Rhea" id="RHEA:65296"/>
        <dbReference type="Rhea" id="RHEA-COMP:10685"/>
        <dbReference type="Rhea" id="RHEA-COMP:10686"/>
        <dbReference type="ChEBI" id="CHEBI:15378"/>
        <dbReference type="ChEBI" id="CHEBI:57692"/>
        <dbReference type="ChEBI" id="CHEBI:58307"/>
        <dbReference type="ChEBI" id="CHEBI:156439"/>
        <dbReference type="ChEBI" id="CHEBI:156440"/>
    </reaction>
    <physiologicalReaction direction="left-to-right" evidence="2">
        <dbReference type="Rhea" id="RHEA:65297"/>
    </physiologicalReaction>
</comment>
<comment type="catalytic activity">
    <reaction evidence="2">
        <text>butanoyl-CoA + oxidized [electron-transfer flavoprotein] + H(+) = (2E)-butenoyl-CoA + reduced [electron-transfer flavoprotein]</text>
        <dbReference type="Rhea" id="RHEA:24004"/>
        <dbReference type="Rhea" id="RHEA-COMP:10685"/>
        <dbReference type="Rhea" id="RHEA-COMP:10686"/>
        <dbReference type="ChEBI" id="CHEBI:15378"/>
        <dbReference type="ChEBI" id="CHEBI:57332"/>
        <dbReference type="ChEBI" id="CHEBI:57371"/>
        <dbReference type="ChEBI" id="CHEBI:57692"/>
        <dbReference type="ChEBI" id="CHEBI:58307"/>
    </reaction>
    <physiologicalReaction direction="left-to-right" evidence="2">
        <dbReference type="Rhea" id="RHEA:24005"/>
    </physiologicalReaction>
</comment>
<comment type="catalytic activity">
    <reaction evidence="2">
        <text>2-methylpropanoyl-CoA + oxidized [electron-transfer flavoprotein] + H(+) = 2-methylpropenoyl-CoA + reduced [electron-transfer flavoprotein]</text>
        <dbReference type="Rhea" id="RHEA:44180"/>
        <dbReference type="Rhea" id="RHEA-COMP:10685"/>
        <dbReference type="Rhea" id="RHEA-COMP:10686"/>
        <dbReference type="ChEBI" id="CHEBI:15378"/>
        <dbReference type="ChEBI" id="CHEBI:57338"/>
        <dbReference type="ChEBI" id="CHEBI:57692"/>
        <dbReference type="ChEBI" id="CHEBI:58307"/>
        <dbReference type="ChEBI" id="CHEBI:62500"/>
    </reaction>
    <physiologicalReaction direction="left-to-right" evidence="2">
        <dbReference type="Rhea" id="RHEA:44181"/>
    </physiologicalReaction>
</comment>
<comment type="catalytic activity">
    <reaction evidence="2">
        <text>hexanoyl-CoA + oxidized [electron-transfer flavoprotein] + H(+) = (2E)-hexenoyl-CoA + reduced [electron-transfer flavoprotein]</text>
        <dbReference type="Rhea" id="RHEA:43464"/>
        <dbReference type="Rhea" id="RHEA-COMP:10685"/>
        <dbReference type="Rhea" id="RHEA-COMP:10686"/>
        <dbReference type="ChEBI" id="CHEBI:15378"/>
        <dbReference type="ChEBI" id="CHEBI:57692"/>
        <dbReference type="ChEBI" id="CHEBI:58307"/>
        <dbReference type="ChEBI" id="CHEBI:62077"/>
        <dbReference type="ChEBI" id="CHEBI:62620"/>
    </reaction>
    <physiologicalReaction direction="left-to-right" evidence="2">
        <dbReference type="Rhea" id="RHEA:43465"/>
    </physiologicalReaction>
</comment>
<comment type="catalytic activity">
    <reaction evidence="2">
        <text>valproyl-CoA + oxidized [electron-transfer flavoprotein] + H(+) = (2E)-2-propylpent-2-enoyl-CoA + reduced [electron-transfer flavoprotein]</text>
        <dbReference type="Rhea" id="RHEA:65344"/>
        <dbReference type="Rhea" id="RHEA-COMP:10685"/>
        <dbReference type="Rhea" id="RHEA-COMP:10686"/>
        <dbReference type="ChEBI" id="CHEBI:15378"/>
        <dbReference type="ChEBI" id="CHEBI:57692"/>
        <dbReference type="ChEBI" id="CHEBI:58307"/>
        <dbReference type="ChEBI" id="CHEBI:156457"/>
        <dbReference type="ChEBI" id="CHEBI:156458"/>
    </reaction>
    <physiologicalReaction direction="left-to-right" evidence="2">
        <dbReference type="Rhea" id="RHEA:65345"/>
    </physiologicalReaction>
</comment>
<comment type="cofactor">
    <cofactor evidence="1">
        <name>FAD</name>
        <dbReference type="ChEBI" id="CHEBI:57692"/>
    </cofactor>
</comment>
<comment type="pathway">
    <text evidence="1">Lipid metabolism; mitochondrial fatty acid beta-oxidation.</text>
</comment>
<comment type="pathway">
    <text evidence="1">Amino-acid degradation; L-isoleucine degradation.</text>
</comment>
<comment type="subunit">
    <text evidence="1">Homotetramer.</text>
</comment>
<comment type="subcellular location">
    <subcellularLocation>
        <location evidence="1">Mitochondrion matrix</location>
    </subcellularLocation>
</comment>
<comment type="similarity">
    <text evidence="4">Belongs to the acyl-CoA dehydrogenase family.</text>
</comment>
<proteinExistence type="evidence at transcript level"/>
<keyword id="KW-0007">Acetylation</keyword>
<keyword id="KW-0274">FAD</keyword>
<keyword id="KW-0276">Fatty acid metabolism</keyword>
<keyword id="KW-0285">Flavoprotein</keyword>
<keyword id="KW-0443">Lipid metabolism</keyword>
<keyword id="KW-0496">Mitochondrion</keyword>
<keyword id="KW-0560">Oxidoreductase</keyword>
<keyword id="KW-0597">Phosphoprotein</keyword>
<keyword id="KW-1185">Reference proteome</keyword>
<keyword id="KW-0809">Transit peptide</keyword>
<evidence type="ECO:0000250" key="1">
    <source>
        <dbReference type="UniProtKB" id="P45954"/>
    </source>
</evidence>
<evidence type="ECO:0000250" key="2">
    <source>
        <dbReference type="UniProtKB" id="P70584"/>
    </source>
</evidence>
<evidence type="ECO:0000250" key="3">
    <source>
        <dbReference type="UniProtKB" id="Q9DBL1"/>
    </source>
</evidence>
<evidence type="ECO:0000305" key="4"/>
<organism>
    <name type="scientific">Bos taurus</name>
    <name type="common">Bovine</name>
    <dbReference type="NCBI Taxonomy" id="9913"/>
    <lineage>
        <taxon>Eukaryota</taxon>
        <taxon>Metazoa</taxon>
        <taxon>Chordata</taxon>
        <taxon>Craniata</taxon>
        <taxon>Vertebrata</taxon>
        <taxon>Euteleostomi</taxon>
        <taxon>Mammalia</taxon>
        <taxon>Eutheria</taxon>
        <taxon>Laurasiatheria</taxon>
        <taxon>Artiodactyla</taxon>
        <taxon>Ruminantia</taxon>
        <taxon>Pecora</taxon>
        <taxon>Bovidae</taxon>
        <taxon>Bovinae</taxon>
        <taxon>Bos</taxon>
    </lineage>
</organism>
<protein>
    <recommendedName>
        <fullName evidence="2">Short/branched chain specific acyl-CoA dehydrogenase, mitochondrial</fullName>
        <shortName evidence="2">SBCAD</shortName>
        <ecNumber evidence="2">1.3.8.5</ecNumber>
    </recommendedName>
    <alternativeName>
        <fullName>2-methyl branched chain acyl-CoA dehydrogenase</fullName>
        <shortName>2-MEBCAD</shortName>
    </alternativeName>
    <alternativeName>
        <fullName>2-methylbutyryl-coenzyme A dehydrogenase</fullName>
        <shortName>2-methylbutyryl-CoA dehydrogenase</shortName>
    </alternativeName>
</protein>
<sequence>MERATVRLLRGGALLRRNFPSCLSSWKTPPHALNSSQSEAQLKATSNGPPLAPLQTFTDEEMMIKSAVKKFAQEQVAPFVSKMDEDSKMEKSVIQGLFQQGLMGIEIDTKYGGTGASFFSSVLVIEELAKVDASVALVCDIQNTLINRMIGKYGTEEQKATYLPKLATEKASSICISETGAGSDSFAMKTRADKKGDYYIINGSKMWISSAEIAGLFVVMANADFSAGYKGITCFLVDGDTEGLHVGKPENKLGIRASSTCPVTFENVKVPKTNILGQVGHGYKYAIGSLNEGRIGIAAQMLGVAQGCFDYTIPYIKERKQFGRRVFDFQGLQHQVAHMATQLEAARLLTYNAARLLEAGRPMIKEASMAKYHASELAGLITSKCIEWMGGVGYTKSYPVEKYFRDAKIGTIYEGTSNIQLNTIAKCISAEY</sequence>
<gene>
    <name type="primary">ACADSB</name>
</gene>
<reference key="1">
    <citation type="journal article" date="2005" name="BMC Genomics">
        <title>Characterization of 954 bovine full-CDS cDNA sequences.</title>
        <authorList>
            <person name="Harhay G.P."/>
            <person name="Sonstegard T.S."/>
            <person name="Keele J.W."/>
            <person name="Heaton M.P."/>
            <person name="Clawson M.L."/>
            <person name="Snelling W.M."/>
            <person name="Wiedmann R.T."/>
            <person name="Van Tassell C.P."/>
            <person name="Smith T.P.L."/>
        </authorList>
    </citation>
    <scope>NUCLEOTIDE SEQUENCE [LARGE SCALE MRNA]</scope>
</reference>
<reference key="2">
    <citation type="submission" date="2006-08" db="EMBL/GenBank/DDBJ databases">
        <authorList>
            <consortium name="NIH - Mammalian Gene Collection (MGC) project"/>
        </authorList>
    </citation>
    <scope>NUCLEOTIDE SEQUENCE [LARGE SCALE MRNA]</scope>
    <source>
        <strain>Hereford</strain>
        <tissue>Hippocampus</tissue>
    </source>
</reference>
<accession>Q5EAD4</accession>
<feature type="transit peptide" description="Mitochondrion" evidence="1">
    <location>
        <begin position="1"/>
        <end position="33"/>
    </location>
</feature>
<feature type="chain" id="PRO_0000281991" description="Short/branched chain specific acyl-CoA dehydrogenase, mitochondrial">
    <location>
        <begin position="34"/>
        <end position="432"/>
    </location>
</feature>
<feature type="active site" description="Proton acceptor" evidence="1">
    <location>
        <position position="414"/>
    </location>
</feature>
<feature type="binding site" description="in other chain" evidence="1">
    <location>
        <begin position="174"/>
        <end position="183"/>
    </location>
    <ligand>
        <name>FAD</name>
        <dbReference type="ChEBI" id="CHEBI:57692"/>
        <note>ligand shared between dimeric partners</note>
    </ligand>
</feature>
<feature type="binding site" evidence="1">
    <location>
        <position position="183"/>
    </location>
    <ligand>
        <name>substrate</name>
    </ligand>
</feature>
<feature type="binding site" description="in other chain" evidence="1">
    <location>
        <begin position="207"/>
        <end position="209"/>
    </location>
    <ligand>
        <name>FAD</name>
        <dbReference type="ChEBI" id="CHEBI:57692"/>
        <note>ligand shared between dimeric partners</note>
    </ligand>
</feature>
<feature type="binding site" evidence="1">
    <location>
        <position position="229"/>
    </location>
    <ligand>
        <name>substrate</name>
    </ligand>
</feature>
<feature type="binding site" evidence="1">
    <location>
        <position position="283"/>
    </location>
    <ligand>
        <name>substrate</name>
    </ligand>
</feature>
<feature type="binding site" evidence="1">
    <location>
        <begin position="291"/>
        <end position="294"/>
    </location>
    <ligand>
        <name>substrate</name>
    </ligand>
</feature>
<feature type="binding site" evidence="1">
    <location>
        <position position="319"/>
    </location>
    <ligand>
        <name>FAD</name>
        <dbReference type="ChEBI" id="CHEBI:57692"/>
        <note>ligand shared between dimeric partners</note>
    </ligand>
</feature>
<feature type="binding site" evidence="1">
    <location>
        <position position="330"/>
    </location>
    <ligand>
        <name>FAD</name>
        <dbReference type="ChEBI" id="CHEBI:57692"/>
        <note>ligand shared between dimeric partners</note>
    </ligand>
</feature>
<feature type="binding site" evidence="1">
    <location>
        <begin position="387"/>
        <end position="391"/>
    </location>
    <ligand>
        <name>FAD</name>
        <dbReference type="ChEBI" id="CHEBI:57692"/>
        <note>ligand shared between dimeric partners</note>
    </ligand>
</feature>
<feature type="binding site" description="in other chain" evidence="1">
    <location>
        <begin position="416"/>
        <end position="418"/>
    </location>
    <ligand>
        <name>FAD</name>
        <dbReference type="ChEBI" id="CHEBI:57692"/>
        <note>ligand shared between dimeric partners</note>
    </ligand>
</feature>
<feature type="modified residue" description="N6-acetyllysine; alternate" evidence="3">
    <location>
        <position position="70"/>
    </location>
</feature>
<feature type="modified residue" description="N6-succinyllysine; alternate" evidence="3">
    <location>
        <position position="70"/>
    </location>
</feature>
<feature type="modified residue" description="Phosphoserine" evidence="1">
    <location>
        <position position="183"/>
    </location>
</feature>
<feature type="modified residue" description="N6-acetyllysine; alternate" evidence="1">
    <location>
        <position position="284"/>
    </location>
</feature>
<feature type="modified residue" description="N6-succinyllysine; alternate" evidence="3">
    <location>
        <position position="284"/>
    </location>
</feature>
<feature type="modified residue" description="N6-acetyllysine" evidence="3">
    <location>
        <position position="426"/>
    </location>
</feature>
<dbReference type="EC" id="1.3.8.5" evidence="2"/>
<dbReference type="EMBL" id="BC122698">
    <property type="protein sequence ID" value="AAI22699.1"/>
    <property type="molecule type" value="mRNA"/>
</dbReference>
<dbReference type="EMBL" id="BT020635">
    <property type="protein sequence ID" value="AAX08652.1"/>
    <property type="molecule type" value="mRNA"/>
</dbReference>
<dbReference type="RefSeq" id="NP_001017933.1">
    <property type="nucleotide sequence ID" value="NM_001017933.1"/>
</dbReference>
<dbReference type="SMR" id="Q5EAD4"/>
<dbReference type="FunCoup" id="Q5EAD4">
    <property type="interactions" value="1789"/>
</dbReference>
<dbReference type="STRING" id="9913.ENSBTAP00000024017"/>
<dbReference type="PaxDb" id="9913-ENSBTAP00000024017"/>
<dbReference type="Ensembl" id="ENSBTAT00000071662.2">
    <property type="protein sequence ID" value="ENSBTAP00000063274.2"/>
    <property type="gene ID" value="ENSBTAG00000018041.4"/>
</dbReference>
<dbReference type="GeneID" id="504301"/>
<dbReference type="KEGG" id="bta:504301"/>
<dbReference type="CTD" id="36"/>
<dbReference type="VEuPathDB" id="HostDB:ENSBTAG00000018041"/>
<dbReference type="VGNC" id="VGNC:50245">
    <property type="gene designation" value="ACADSB"/>
</dbReference>
<dbReference type="eggNOG" id="KOG0139">
    <property type="taxonomic scope" value="Eukaryota"/>
</dbReference>
<dbReference type="GeneTree" id="ENSGT00940000156525"/>
<dbReference type="HOGENOM" id="CLU_018204_0_0_1"/>
<dbReference type="InParanoid" id="Q5EAD4"/>
<dbReference type="OMA" id="DAMFSYC"/>
<dbReference type="OrthoDB" id="10262177at2759"/>
<dbReference type="TreeFam" id="TF105055"/>
<dbReference type="Reactome" id="R-BTA-70895">
    <property type="pathway name" value="Branched-chain amino acid catabolism"/>
</dbReference>
<dbReference type="Reactome" id="R-BTA-9837999">
    <property type="pathway name" value="Mitochondrial protein degradation"/>
</dbReference>
<dbReference type="UniPathway" id="UPA00364"/>
<dbReference type="UniPathway" id="UPA00660"/>
<dbReference type="Proteomes" id="UP000009136">
    <property type="component" value="Chromosome 26"/>
</dbReference>
<dbReference type="Bgee" id="ENSBTAG00000018041">
    <property type="expression patterns" value="Expressed in rumen epithelium and 104 other cell types or tissues"/>
</dbReference>
<dbReference type="GO" id="GO:0005759">
    <property type="term" value="C:mitochondrial matrix"/>
    <property type="evidence" value="ECO:0007669"/>
    <property type="project" value="UniProtKB-SubCell"/>
</dbReference>
<dbReference type="GO" id="GO:0005739">
    <property type="term" value="C:mitochondrion"/>
    <property type="evidence" value="ECO:0000250"/>
    <property type="project" value="UniProtKB"/>
</dbReference>
<dbReference type="GO" id="GO:0003995">
    <property type="term" value="F:acyl-CoA dehydrogenase activity"/>
    <property type="evidence" value="ECO:0000318"/>
    <property type="project" value="GO_Central"/>
</dbReference>
<dbReference type="GO" id="GO:0050660">
    <property type="term" value="F:flavin adenine dinucleotide binding"/>
    <property type="evidence" value="ECO:0007669"/>
    <property type="project" value="InterPro"/>
</dbReference>
<dbReference type="GO" id="GO:0042802">
    <property type="term" value="F:identical protein binding"/>
    <property type="evidence" value="ECO:0000250"/>
    <property type="project" value="UniProtKB"/>
</dbReference>
<dbReference type="GO" id="GO:0003853">
    <property type="term" value="F:short-chain 2-methyl fatty acyl-CoA dehydrogenase activity"/>
    <property type="evidence" value="ECO:0000250"/>
    <property type="project" value="UniProtKB"/>
</dbReference>
<dbReference type="GO" id="GO:0016937">
    <property type="term" value="F:short-chain fatty acyl-CoA dehydrogenase activity"/>
    <property type="evidence" value="ECO:0000250"/>
    <property type="project" value="UniProtKB"/>
</dbReference>
<dbReference type="GO" id="GO:0006631">
    <property type="term" value="P:fatty acid metabolic process"/>
    <property type="evidence" value="ECO:0000250"/>
    <property type="project" value="UniProtKB"/>
</dbReference>
<dbReference type="GO" id="GO:0006550">
    <property type="term" value="P:isoleucine catabolic process"/>
    <property type="evidence" value="ECO:0000250"/>
    <property type="project" value="UniProtKB"/>
</dbReference>
<dbReference type="CDD" id="cd01158">
    <property type="entry name" value="SCAD_SBCAD"/>
    <property type="match status" value="1"/>
</dbReference>
<dbReference type="FunFam" id="1.10.540.10:FF:000012">
    <property type="entry name" value="Acyl-CoA dehydrogenase short/branched chain"/>
    <property type="match status" value="1"/>
</dbReference>
<dbReference type="FunFam" id="1.20.140.10:FF:000002">
    <property type="entry name" value="Acyl-CoA dehydrogenase short/branched chain"/>
    <property type="match status" value="1"/>
</dbReference>
<dbReference type="FunFam" id="2.40.110.10:FF:000001">
    <property type="entry name" value="Acyl-CoA dehydrogenase, mitochondrial"/>
    <property type="match status" value="1"/>
</dbReference>
<dbReference type="Gene3D" id="1.10.540.10">
    <property type="entry name" value="Acyl-CoA dehydrogenase/oxidase, N-terminal domain"/>
    <property type="match status" value="1"/>
</dbReference>
<dbReference type="Gene3D" id="2.40.110.10">
    <property type="entry name" value="Butyryl-CoA Dehydrogenase, subunit A, domain 2"/>
    <property type="match status" value="1"/>
</dbReference>
<dbReference type="Gene3D" id="1.20.140.10">
    <property type="entry name" value="Butyryl-CoA Dehydrogenase, subunit A, domain 3"/>
    <property type="match status" value="1"/>
</dbReference>
<dbReference type="InterPro" id="IPR006089">
    <property type="entry name" value="Acyl-CoA_DH_CS"/>
</dbReference>
<dbReference type="InterPro" id="IPR006091">
    <property type="entry name" value="Acyl-CoA_Oxase/DH_mid-dom"/>
</dbReference>
<dbReference type="InterPro" id="IPR046373">
    <property type="entry name" value="Acyl-CoA_Oxase/DH_mid-dom_sf"/>
</dbReference>
<dbReference type="InterPro" id="IPR036250">
    <property type="entry name" value="AcylCo_DH-like_C"/>
</dbReference>
<dbReference type="InterPro" id="IPR009075">
    <property type="entry name" value="AcylCo_DH/oxidase_C"/>
</dbReference>
<dbReference type="InterPro" id="IPR013786">
    <property type="entry name" value="AcylCoA_DH/ox_N"/>
</dbReference>
<dbReference type="InterPro" id="IPR037069">
    <property type="entry name" value="AcylCoA_DH/ox_N_sf"/>
</dbReference>
<dbReference type="InterPro" id="IPR009100">
    <property type="entry name" value="AcylCoA_DH/oxidase_NM_dom_sf"/>
</dbReference>
<dbReference type="PANTHER" id="PTHR43884">
    <property type="entry name" value="ACYL-COA DEHYDROGENASE"/>
    <property type="match status" value="1"/>
</dbReference>
<dbReference type="PANTHER" id="PTHR43884:SF1">
    <property type="entry name" value="SHORT_BRANCHED CHAIN SPECIFIC ACYL-COA DEHYDROGENASE, MITOCHONDRIAL"/>
    <property type="match status" value="1"/>
</dbReference>
<dbReference type="Pfam" id="PF00441">
    <property type="entry name" value="Acyl-CoA_dh_1"/>
    <property type="match status" value="1"/>
</dbReference>
<dbReference type="Pfam" id="PF02770">
    <property type="entry name" value="Acyl-CoA_dh_M"/>
    <property type="match status" value="1"/>
</dbReference>
<dbReference type="Pfam" id="PF02771">
    <property type="entry name" value="Acyl-CoA_dh_N"/>
    <property type="match status" value="1"/>
</dbReference>
<dbReference type="SUPFAM" id="SSF47203">
    <property type="entry name" value="Acyl-CoA dehydrogenase C-terminal domain-like"/>
    <property type="match status" value="1"/>
</dbReference>
<dbReference type="SUPFAM" id="SSF56645">
    <property type="entry name" value="Acyl-CoA dehydrogenase NM domain-like"/>
    <property type="match status" value="1"/>
</dbReference>
<dbReference type="PROSITE" id="PS00072">
    <property type="entry name" value="ACYL_COA_DH_1"/>
    <property type="match status" value="1"/>
</dbReference>
<name>ACDSB_BOVIN</name>